<organism>
    <name type="scientific">Triticum turgidum subsp. durum</name>
    <name type="common">Durum wheat</name>
    <name type="synonym">Triticum durum</name>
    <dbReference type="NCBI Taxonomy" id="4567"/>
    <lineage>
        <taxon>Eukaryota</taxon>
        <taxon>Viridiplantae</taxon>
        <taxon>Streptophyta</taxon>
        <taxon>Embryophyta</taxon>
        <taxon>Tracheophyta</taxon>
        <taxon>Spermatophyta</taxon>
        <taxon>Magnoliopsida</taxon>
        <taxon>Liliopsida</taxon>
        <taxon>Poales</taxon>
        <taxon>Poaceae</taxon>
        <taxon>BOP clade</taxon>
        <taxon>Pooideae</taxon>
        <taxon>Triticodae</taxon>
        <taxon>Triticeae</taxon>
        <taxon>Triticinae</taxon>
        <taxon>Triticum</taxon>
    </lineage>
</organism>
<gene>
    <name type="primary">NAM-A1</name>
</gene>
<feature type="chain" id="PRO_0000420372" description="NAC transcription factor NAM-A1">
    <location>
        <begin position="1"/>
        <end position="405"/>
    </location>
</feature>
<feature type="domain" description="NAC" evidence="1">
    <location>
        <begin position="33"/>
        <end position="204"/>
    </location>
</feature>
<feature type="DNA-binding region" evidence="1">
    <location>
        <begin position="137"/>
        <end position="210"/>
    </location>
</feature>
<feature type="region of interest" description="Disordered" evidence="2">
    <location>
        <begin position="1"/>
        <end position="38"/>
    </location>
</feature>
<feature type="compositionally biased region" description="Low complexity" evidence="2">
    <location>
        <begin position="1"/>
        <end position="10"/>
    </location>
</feature>
<accession>A0SPJ3</accession>
<keyword id="KW-0238">DNA-binding</keyword>
<keyword id="KW-0539">Nucleus</keyword>
<keyword id="KW-0804">Transcription</keyword>
<keyword id="KW-0805">Transcription regulation</keyword>
<sequence>MGSSDSSSGSAQKAARHQHEPPPPRQRGSAPELPPGFRFHPTDEELVVHYLKKKAAKVPLPVTIIAEVDLYKFDPWELPEKATFGEQEWYFFSPRDRKYPNGARPNRAATSGYWKATGTDKPILASGTGCGLVREKLGVKKALVFYRGKPPKGLKTNWIMHEYRLTDVSGSTTTSRPPPPVTGGSRAAASLRLDDWVLCRIYKKINKAAAGDQQRSTECEDSVEDAVTAYPLYATAGMAGAGAHGSNYASPSLLHHQDSHFLEGLFTADDAGLSAGATSLSHLAAAARASPAPTKQFLAPSSSTPFNWLDASPAGILPQARNFPGFNRSRNVGNMSLSSTADMAGAAGNAVNAMSAFMNPLPVQDGTYHQHHVILGAPLAPEATTGGATSGFQHPVQVSGVNWNP</sequence>
<proteinExistence type="evidence at transcript level"/>
<reference key="1">
    <citation type="journal article" date="2006" name="Science">
        <title>A NAC Gene regulating senescence improves grain protein, zinc, and iron content in wheat.</title>
        <authorList>
            <person name="Uauy C."/>
            <person name="Distelfeld A."/>
            <person name="Fahima T."/>
            <person name="Blechl A."/>
            <person name="Dubcovsky J."/>
        </authorList>
    </citation>
    <scope>NUCLEOTIDE SEQUENCE [GENOMIC DNA]</scope>
    <scope>FUNCTION</scope>
    <scope>TISSUE SPECIFICITY</scope>
    <scope>DEVELOPMENTAL STAGE</scope>
</reference>
<reference key="2">
    <citation type="journal article" date="2012" name="Plant Mol. Biol.">
        <title>Divergent functions of orthologous NAC transcription factors in wheat and rice.</title>
        <authorList>
            <person name="Distelfeld A."/>
            <person name="Pearce S.P."/>
            <person name="Avni R."/>
            <person name="Scherer B."/>
            <person name="Uauy C."/>
            <person name="Piston F."/>
            <person name="Slade A."/>
            <person name="Zhao R."/>
            <person name="Dubcovsky J."/>
        </authorList>
    </citation>
    <scope>FUNCTION</scope>
    <scope>DISRUPTION PHENOTYPE</scope>
</reference>
<protein>
    <recommendedName>
        <fullName>NAC transcription factor NAM-A1</fullName>
        <shortName>TtNAM-A1</shortName>
    </recommendedName>
</protein>
<name>NAMA1_TRITD</name>
<comment type="function">
    <text evidence="3 4">Transcription factor of the NAC family associated with the grain protein content (GPC). Accelerates senescence and increases nutrient remobilization from leaves to developing grains. The tetraploid cultivated wheat (T.durum) contains one additional gene coding for a functional protein (NAM-B2) and one extra pseudogene (NAM-B1) (PubMed:17124321).</text>
</comment>
<comment type="subcellular location">
    <subcellularLocation>
        <location evidence="5">Nucleus</location>
    </subcellularLocation>
</comment>
<comment type="tissue specificity">
    <text evidence="3">Expressed in flag leaves, green spikes and peduncles.</text>
</comment>
<comment type="developmental stage">
    <text evidence="3">Increased expression during grain maturation.</text>
</comment>
<comment type="domain">
    <text>The NAC domain includes a DNA-binding domain and a dimerization domain.</text>
</comment>
<comment type="disruption phenotype">
    <text evidence="4">No visible phenotype, but higher chlorophyll content and delayed senescence.</text>
</comment>
<comment type="miscellaneous">
    <text>High grain protein content (GPC) is a desirable trait in breadmaking and pasta wheat varieties because of its positive effects on quality and nutritional value while Low GPC is a desirable trait for barley malt and beer production.</text>
</comment>
<evidence type="ECO:0000255" key="1">
    <source>
        <dbReference type="PROSITE-ProRule" id="PRU00353"/>
    </source>
</evidence>
<evidence type="ECO:0000256" key="2">
    <source>
        <dbReference type="SAM" id="MobiDB-lite"/>
    </source>
</evidence>
<evidence type="ECO:0000269" key="3">
    <source>
    </source>
</evidence>
<evidence type="ECO:0000269" key="4">
    <source>
    </source>
</evidence>
<evidence type="ECO:0000305" key="5"/>
<dbReference type="EMBL" id="DQ869672">
    <property type="protein sequence ID" value="ABI94352.1"/>
    <property type="molecule type" value="Genomic_DNA"/>
</dbReference>
<dbReference type="SMR" id="A0SPJ3"/>
<dbReference type="GO" id="GO:0005634">
    <property type="term" value="C:nucleus"/>
    <property type="evidence" value="ECO:0007669"/>
    <property type="project" value="UniProtKB-SubCell"/>
</dbReference>
<dbReference type="GO" id="GO:0003677">
    <property type="term" value="F:DNA binding"/>
    <property type="evidence" value="ECO:0007669"/>
    <property type="project" value="UniProtKB-KW"/>
</dbReference>
<dbReference type="GO" id="GO:0006355">
    <property type="term" value="P:regulation of DNA-templated transcription"/>
    <property type="evidence" value="ECO:0007669"/>
    <property type="project" value="InterPro"/>
</dbReference>
<dbReference type="GO" id="GO:0048731">
    <property type="term" value="P:system development"/>
    <property type="evidence" value="ECO:0007669"/>
    <property type="project" value="TreeGrafter"/>
</dbReference>
<dbReference type="FunFam" id="2.170.150.80:FF:000005">
    <property type="entry name" value="NAC transcription factor 56"/>
    <property type="match status" value="1"/>
</dbReference>
<dbReference type="Gene3D" id="2.170.150.80">
    <property type="entry name" value="NAC domain"/>
    <property type="match status" value="1"/>
</dbReference>
<dbReference type="InterPro" id="IPR003441">
    <property type="entry name" value="NAC-dom"/>
</dbReference>
<dbReference type="InterPro" id="IPR036093">
    <property type="entry name" value="NAC_dom_sf"/>
</dbReference>
<dbReference type="PANTHER" id="PTHR31719">
    <property type="entry name" value="NAC TRANSCRIPTION FACTOR 56"/>
    <property type="match status" value="1"/>
</dbReference>
<dbReference type="PANTHER" id="PTHR31719:SF149">
    <property type="entry name" value="NAC TRANSCRIPTION FACTOR NAM-2"/>
    <property type="match status" value="1"/>
</dbReference>
<dbReference type="Pfam" id="PF02365">
    <property type="entry name" value="NAM"/>
    <property type="match status" value="1"/>
</dbReference>
<dbReference type="SUPFAM" id="SSF101941">
    <property type="entry name" value="NAC domain"/>
    <property type="match status" value="1"/>
</dbReference>
<dbReference type="PROSITE" id="PS51005">
    <property type="entry name" value="NAC"/>
    <property type="match status" value="1"/>
</dbReference>